<accession>C4ZY93</accession>
<gene>
    <name evidence="1" type="primary">rsxD</name>
    <name type="ordered locus">BWG_1445</name>
</gene>
<protein>
    <recommendedName>
        <fullName evidence="1">Ion-translocating oxidoreductase complex subunit D</fullName>
        <ecNumber evidence="1">7.-.-.-</ecNumber>
    </recommendedName>
    <alternativeName>
        <fullName evidence="1">Rsx electron transport complex subunit D</fullName>
    </alternativeName>
</protein>
<reference key="1">
    <citation type="journal article" date="2009" name="J. Bacteriol.">
        <title>Genomic sequencing reveals regulatory mutations and recombinational events in the widely used MC4100 lineage of Escherichia coli K-12.</title>
        <authorList>
            <person name="Ferenci T."/>
            <person name="Zhou Z."/>
            <person name="Betteridge T."/>
            <person name="Ren Y."/>
            <person name="Liu Y."/>
            <person name="Feng L."/>
            <person name="Reeves P.R."/>
            <person name="Wang L."/>
        </authorList>
    </citation>
    <scope>NUCLEOTIDE SEQUENCE [LARGE SCALE GENOMIC DNA]</scope>
    <source>
        <strain>K12 / MC4100 / BW2952</strain>
    </source>
</reference>
<keyword id="KW-0997">Cell inner membrane</keyword>
<keyword id="KW-1003">Cell membrane</keyword>
<keyword id="KW-0249">Electron transport</keyword>
<keyword id="KW-0285">Flavoprotein</keyword>
<keyword id="KW-0288">FMN</keyword>
<keyword id="KW-0472">Membrane</keyword>
<keyword id="KW-0597">Phosphoprotein</keyword>
<keyword id="KW-1278">Translocase</keyword>
<keyword id="KW-0812">Transmembrane</keyword>
<keyword id="KW-1133">Transmembrane helix</keyword>
<keyword id="KW-0813">Transport</keyword>
<dbReference type="EC" id="7.-.-.-" evidence="1"/>
<dbReference type="EMBL" id="CP001396">
    <property type="protein sequence ID" value="ACR64491.1"/>
    <property type="molecule type" value="Genomic_DNA"/>
</dbReference>
<dbReference type="RefSeq" id="WP_000231927.1">
    <property type="nucleotide sequence ID" value="NC_012759.1"/>
</dbReference>
<dbReference type="SMR" id="C4ZY93"/>
<dbReference type="KEGG" id="ebw:BWG_1445"/>
<dbReference type="HOGENOM" id="CLU_042020_0_0_6"/>
<dbReference type="GO" id="GO:0005886">
    <property type="term" value="C:plasma membrane"/>
    <property type="evidence" value="ECO:0007669"/>
    <property type="project" value="UniProtKB-SubCell"/>
</dbReference>
<dbReference type="GO" id="GO:0022900">
    <property type="term" value="P:electron transport chain"/>
    <property type="evidence" value="ECO:0007669"/>
    <property type="project" value="UniProtKB-UniRule"/>
</dbReference>
<dbReference type="GO" id="GO:0055085">
    <property type="term" value="P:transmembrane transport"/>
    <property type="evidence" value="ECO:0007669"/>
    <property type="project" value="InterPro"/>
</dbReference>
<dbReference type="HAMAP" id="MF_00462">
    <property type="entry name" value="RsxD_RnfD"/>
    <property type="match status" value="1"/>
</dbReference>
<dbReference type="InterPro" id="IPR004338">
    <property type="entry name" value="NqrB/RnfD"/>
</dbReference>
<dbReference type="InterPro" id="IPR011303">
    <property type="entry name" value="RnfD_bac"/>
</dbReference>
<dbReference type="NCBIfam" id="NF002011">
    <property type="entry name" value="PRK00816.1"/>
    <property type="match status" value="1"/>
</dbReference>
<dbReference type="NCBIfam" id="TIGR01946">
    <property type="entry name" value="rnfD"/>
    <property type="match status" value="1"/>
</dbReference>
<dbReference type="PANTHER" id="PTHR30578">
    <property type="entry name" value="ELECTRON TRANSPORT COMPLEX PROTEIN RNFD"/>
    <property type="match status" value="1"/>
</dbReference>
<dbReference type="PANTHER" id="PTHR30578:SF0">
    <property type="entry name" value="ION-TRANSLOCATING OXIDOREDUCTASE COMPLEX SUBUNIT D"/>
    <property type="match status" value="1"/>
</dbReference>
<dbReference type="Pfam" id="PF03116">
    <property type="entry name" value="NQR2_RnfD_RnfE"/>
    <property type="match status" value="1"/>
</dbReference>
<organism>
    <name type="scientific">Escherichia coli (strain K12 / MC4100 / BW2952)</name>
    <dbReference type="NCBI Taxonomy" id="595496"/>
    <lineage>
        <taxon>Bacteria</taxon>
        <taxon>Pseudomonadati</taxon>
        <taxon>Pseudomonadota</taxon>
        <taxon>Gammaproteobacteria</taxon>
        <taxon>Enterobacterales</taxon>
        <taxon>Enterobacteriaceae</taxon>
        <taxon>Escherichia</taxon>
    </lineage>
</organism>
<name>RSXD_ECOBW</name>
<evidence type="ECO:0000255" key="1">
    <source>
        <dbReference type="HAMAP-Rule" id="MF_00462"/>
    </source>
</evidence>
<feature type="chain" id="PRO_1000206295" description="Ion-translocating oxidoreductase complex subunit D">
    <location>
        <begin position="1"/>
        <end position="352"/>
    </location>
</feature>
<feature type="transmembrane region" description="Helical" evidence="1">
    <location>
        <begin position="20"/>
        <end position="40"/>
    </location>
</feature>
<feature type="transmembrane region" description="Helical" evidence="1">
    <location>
        <begin position="42"/>
        <end position="62"/>
    </location>
</feature>
<feature type="transmembrane region" description="Helical" evidence="1">
    <location>
        <begin position="78"/>
        <end position="109"/>
    </location>
</feature>
<feature type="transmembrane region" description="Helical" evidence="1">
    <location>
        <begin position="123"/>
        <end position="143"/>
    </location>
</feature>
<feature type="transmembrane region" description="Helical" evidence="1">
    <location>
        <begin position="148"/>
        <end position="168"/>
    </location>
</feature>
<feature type="transmembrane region" description="Helical" evidence="1">
    <location>
        <begin position="214"/>
        <end position="234"/>
    </location>
</feature>
<feature type="transmembrane region" description="Helical" evidence="1">
    <location>
        <begin position="242"/>
        <end position="262"/>
    </location>
</feature>
<feature type="transmembrane region" description="Helical" evidence="1">
    <location>
        <begin position="267"/>
        <end position="287"/>
    </location>
</feature>
<feature type="transmembrane region" description="Helical" evidence="1">
    <location>
        <begin position="301"/>
        <end position="321"/>
    </location>
</feature>
<feature type="transmembrane region" description="Helical" evidence="1">
    <location>
        <begin position="322"/>
        <end position="342"/>
    </location>
</feature>
<feature type="modified residue" description="FMN phosphoryl threonine" evidence="1">
    <location>
        <position position="187"/>
    </location>
</feature>
<proteinExistence type="inferred from homology"/>
<comment type="function">
    <text evidence="1">Part of a membrane-bound complex that couples electron transfer with translocation of ions across the membrane. Required to maintain the reduced state of SoxR.</text>
</comment>
<comment type="cofactor">
    <cofactor evidence="1">
        <name>FMN</name>
        <dbReference type="ChEBI" id="CHEBI:58210"/>
    </cofactor>
</comment>
<comment type="subunit">
    <text evidence="1">The complex is composed of six subunits: RsxA, RsxB, RsxC, RsxD, RsxE and RsxG.</text>
</comment>
<comment type="subcellular location">
    <subcellularLocation>
        <location evidence="1">Cell inner membrane</location>
        <topology evidence="1">Multi-pass membrane protein</topology>
    </subcellularLocation>
</comment>
<comment type="similarity">
    <text evidence="1">Belongs to the NqrB/RnfD family.</text>
</comment>
<sequence length="352" mass="38140">MVFRIASSPYTHNQRQTSRIMLLVLLAAVPGIAAQLWFFGWGTLVQILLASVSALLAEALVLKLRKQSVAATLKDNSALLTGLLLAVSIPPLAPWWMVVLGTVFAVIIAKQLYGGLGQNPFNPAMIGYVVLLISFPVQMTSWLPPHEIAVNIPGFIDAIQVIFSGHTASGGDMNTLRLGIDGISQATPLDTFKTSVRAGHSVEQIMQYPIYSGILAGAGWQWVNLAWLAGGVWLLWQKAIRWHIPLSFLVTLALCAMLGWLFSPETLAAPQIHLLSGATMLGAFFILTDPVTASTTNRGRLIFGALAGLLVWLIRSFGGYPDGVAFAVLLANITVPLIDYYTRPRVYGHRKG</sequence>